<protein>
    <recommendedName>
        <fullName evidence="1">Holo-[acyl-carrier-protein] synthase</fullName>
        <shortName evidence="1">Holo-ACP synthase</shortName>
        <ecNumber evidence="1">2.7.8.7</ecNumber>
    </recommendedName>
    <alternativeName>
        <fullName evidence="1">4'-phosphopantetheinyl transferase AcpS</fullName>
    </alternativeName>
</protein>
<evidence type="ECO:0000255" key="1">
    <source>
        <dbReference type="HAMAP-Rule" id="MF_00101"/>
    </source>
</evidence>
<organism>
    <name type="scientific">Listeria monocytogenes serovar 1/2a (strain ATCC BAA-679 / EGD-e)</name>
    <dbReference type="NCBI Taxonomy" id="169963"/>
    <lineage>
        <taxon>Bacteria</taxon>
        <taxon>Bacillati</taxon>
        <taxon>Bacillota</taxon>
        <taxon>Bacilli</taxon>
        <taxon>Bacillales</taxon>
        <taxon>Listeriaceae</taxon>
        <taxon>Listeria</taxon>
    </lineage>
</organism>
<keyword id="KW-0963">Cytoplasm</keyword>
<keyword id="KW-0275">Fatty acid biosynthesis</keyword>
<keyword id="KW-0276">Fatty acid metabolism</keyword>
<keyword id="KW-0444">Lipid biosynthesis</keyword>
<keyword id="KW-0443">Lipid metabolism</keyword>
<keyword id="KW-0460">Magnesium</keyword>
<keyword id="KW-0479">Metal-binding</keyword>
<keyword id="KW-1185">Reference proteome</keyword>
<keyword id="KW-0808">Transferase</keyword>
<accession>Q8Y8L2</accession>
<comment type="function">
    <text evidence="1">Transfers the 4'-phosphopantetheine moiety from coenzyme A to a Ser of acyl-carrier-protein.</text>
</comment>
<comment type="catalytic activity">
    <reaction evidence="1">
        <text>apo-[ACP] + CoA = holo-[ACP] + adenosine 3',5'-bisphosphate + H(+)</text>
        <dbReference type="Rhea" id="RHEA:12068"/>
        <dbReference type="Rhea" id="RHEA-COMP:9685"/>
        <dbReference type="Rhea" id="RHEA-COMP:9690"/>
        <dbReference type="ChEBI" id="CHEBI:15378"/>
        <dbReference type="ChEBI" id="CHEBI:29999"/>
        <dbReference type="ChEBI" id="CHEBI:57287"/>
        <dbReference type="ChEBI" id="CHEBI:58343"/>
        <dbReference type="ChEBI" id="CHEBI:64479"/>
        <dbReference type="EC" id="2.7.8.7"/>
    </reaction>
</comment>
<comment type="cofactor">
    <cofactor evidence="1">
        <name>Mg(2+)</name>
        <dbReference type="ChEBI" id="CHEBI:18420"/>
    </cofactor>
</comment>
<comment type="subcellular location">
    <subcellularLocation>
        <location evidence="1">Cytoplasm</location>
    </subcellularLocation>
</comment>
<comment type="similarity">
    <text evidence="1">Belongs to the P-Pant transferase superfamily. AcpS family.</text>
</comment>
<reference key="1">
    <citation type="journal article" date="2001" name="Science">
        <title>Comparative genomics of Listeria species.</title>
        <authorList>
            <person name="Glaser P."/>
            <person name="Frangeul L."/>
            <person name="Buchrieser C."/>
            <person name="Rusniok C."/>
            <person name="Amend A."/>
            <person name="Baquero F."/>
            <person name="Berche P."/>
            <person name="Bloecker H."/>
            <person name="Brandt P."/>
            <person name="Chakraborty T."/>
            <person name="Charbit A."/>
            <person name="Chetouani F."/>
            <person name="Couve E."/>
            <person name="de Daruvar A."/>
            <person name="Dehoux P."/>
            <person name="Domann E."/>
            <person name="Dominguez-Bernal G."/>
            <person name="Duchaud E."/>
            <person name="Durant L."/>
            <person name="Dussurget O."/>
            <person name="Entian K.-D."/>
            <person name="Fsihi H."/>
            <person name="Garcia-del Portillo F."/>
            <person name="Garrido P."/>
            <person name="Gautier L."/>
            <person name="Goebel W."/>
            <person name="Gomez-Lopez N."/>
            <person name="Hain T."/>
            <person name="Hauf J."/>
            <person name="Jackson D."/>
            <person name="Jones L.-M."/>
            <person name="Kaerst U."/>
            <person name="Kreft J."/>
            <person name="Kuhn M."/>
            <person name="Kunst F."/>
            <person name="Kurapkat G."/>
            <person name="Madueno E."/>
            <person name="Maitournam A."/>
            <person name="Mata Vicente J."/>
            <person name="Ng E."/>
            <person name="Nedjari H."/>
            <person name="Nordsiek G."/>
            <person name="Novella S."/>
            <person name="de Pablos B."/>
            <person name="Perez-Diaz J.-C."/>
            <person name="Purcell R."/>
            <person name="Remmel B."/>
            <person name="Rose M."/>
            <person name="Schlueter T."/>
            <person name="Simoes N."/>
            <person name="Tierrez A."/>
            <person name="Vazquez-Boland J.-A."/>
            <person name="Voss H."/>
            <person name="Wehland J."/>
            <person name="Cossart P."/>
        </authorList>
    </citation>
    <scope>NUCLEOTIDE SEQUENCE [LARGE SCALE GENOMIC DNA]</scope>
    <source>
        <strain>ATCC BAA-679 / EGD-e</strain>
    </source>
</reference>
<feature type="chain" id="PRO_0000175665" description="Holo-[acyl-carrier-protein] synthase">
    <location>
        <begin position="1"/>
        <end position="118"/>
    </location>
</feature>
<feature type="binding site" evidence="1">
    <location>
        <position position="8"/>
    </location>
    <ligand>
        <name>Mg(2+)</name>
        <dbReference type="ChEBI" id="CHEBI:18420"/>
    </ligand>
</feature>
<feature type="binding site" evidence="1">
    <location>
        <position position="58"/>
    </location>
    <ligand>
        <name>Mg(2+)</name>
        <dbReference type="ChEBI" id="CHEBI:18420"/>
    </ligand>
</feature>
<sequence>MIKGIGLDMIDLERVKQVVEKNPRFIERVLTEKEIKQFEKYEGNRKIEFLAGRFAAKEAYAKANGTGFGKHLSFTDVEILQVEDGRPHVTLPVKSGENVFVSITHTARSAAAQVIIEI</sequence>
<proteinExistence type="inferred from homology"/>
<gene>
    <name evidence="1" type="primary">acpS</name>
    <name type="ordered locus">lmo0885</name>
</gene>
<name>ACPS_LISMO</name>
<dbReference type="EC" id="2.7.8.7" evidence="1"/>
<dbReference type="EMBL" id="AL591977">
    <property type="protein sequence ID" value="CAC98963.1"/>
    <property type="molecule type" value="Genomic_DNA"/>
</dbReference>
<dbReference type="PIR" id="AE1185">
    <property type="entry name" value="AE1185"/>
</dbReference>
<dbReference type="RefSeq" id="NP_464411.1">
    <property type="nucleotide sequence ID" value="NC_003210.1"/>
</dbReference>
<dbReference type="RefSeq" id="WP_003721452.1">
    <property type="nucleotide sequence ID" value="NZ_CP149495.1"/>
</dbReference>
<dbReference type="SMR" id="Q8Y8L2"/>
<dbReference type="STRING" id="169963.gene:17593536"/>
<dbReference type="PaxDb" id="169963-lmo0885"/>
<dbReference type="EnsemblBacteria" id="CAC98963">
    <property type="protein sequence ID" value="CAC98963"/>
    <property type="gene ID" value="CAC98963"/>
</dbReference>
<dbReference type="GeneID" id="986540"/>
<dbReference type="KEGG" id="lmo:lmo0885"/>
<dbReference type="PATRIC" id="fig|169963.11.peg.910"/>
<dbReference type="eggNOG" id="COG0736">
    <property type="taxonomic scope" value="Bacteria"/>
</dbReference>
<dbReference type="HOGENOM" id="CLU_089696_1_2_9"/>
<dbReference type="OrthoDB" id="517356at2"/>
<dbReference type="PhylomeDB" id="Q8Y8L2"/>
<dbReference type="BioCyc" id="LMON169963:LMO0885-MONOMER"/>
<dbReference type="Proteomes" id="UP000000817">
    <property type="component" value="Chromosome"/>
</dbReference>
<dbReference type="GO" id="GO:0005737">
    <property type="term" value="C:cytoplasm"/>
    <property type="evidence" value="ECO:0007669"/>
    <property type="project" value="UniProtKB-SubCell"/>
</dbReference>
<dbReference type="GO" id="GO:0008897">
    <property type="term" value="F:holo-[acyl-carrier-protein] synthase activity"/>
    <property type="evidence" value="ECO:0007669"/>
    <property type="project" value="UniProtKB-UniRule"/>
</dbReference>
<dbReference type="GO" id="GO:0000287">
    <property type="term" value="F:magnesium ion binding"/>
    <property type="evidence" value="ECO:0007669"/>
    <property type="project" value="UniProtKB-UniRule"/>
</dbReference>
<dbReference type="GO" id="GO:0006633">
    <property type="term" value="P:fatty acid biosynthetic process"/>
    <property type="evidence" value="ECO:0007669"/>
    <property type="project" value="UniProtKB-UniRule"/>
</dbReference>
<dbReference type="Gene3D" id="3.90.470.20">
    <property type="entry name" value="4'-phosphopantetheinyl transferase domain"/>
    <property type="match status" value="1"/>
</dbReference>
<dbReference type="HAMAP" id="MF_00101">
    <property type="entry name" value="AcpS"/>
    <property type="match status" value="1"/>
</dbReference>
<dbReference type="InterPro" id="IPR008278">
    <property type="entry name" value="4-PPantetheinyl_Trfase_dom"/>
</dbReference>
<dbReference type="InterPro" id="IPR037143">
    <property type="entry name" value="4-PPantetheinyl_Trfase_dom_sf"/>
</dbReference>
<dbReference type="InterPro" id="IPR002582">
    <property type="entry name" value="ACPS"/>
</dbReference>
<dbReference type="InterPro" id="IPR004568">
    <property type="entry name" value="Ppantetheine-prot_Trfase_dom"/>
</dbReference>
<dbReference type="NCBIfam" id="TIGR00516">
    <property type="entry name" value="acpS"/>
    <property type="match status" value="1"/>
</dbReference>
<dbReference type="NCBIfam" id="TIGR00556">
    <property type="entry name" value="pantethn_trn"/>
    <property type="match status" value="1"/>
</dbReference>
<dbReference type="Pfam" id="PF01648">
    <property type="entry name" value="ACPS"/>
    <property type="match status" value="1"/>
</dbReference>
<dbReference type="SUPFAM" id="SSF56214">
    <property type="entry name" value="4'-phosphopantetheinyl transferase"/>
    <property type="match status" value="1"/>
</dbReference>